<dbReference type="EMBL" id="AE014075">
    <property type="protein sequence ID" value="AAN80332.1"/>
    <property type="status" value="ALT_INIT"/>
    <property type="molecule type" value="Genomic_DNA"/>
</dbReference>
<dbReference type="RefSeq" id="WP_000061178.1">
    <property type="nucleotide sequence ID" value="NZ_CP051263.1"/>
</dbReference>
<dbReference type="SMR" id="P64454"/>
<dbReference type="STRING" id="199310.c1870"/>
<dbReference type="GeneID" id="93775593"/>
<dbReference type="KEGG" id="ecc:c1870"/>
<dbReference type="eggNOG" id="ENOG5032ZDC">
    <property type="taxonomic scope" value="Bacteria"/>
</dbReference>
<dbReference type="HOGENOM" id="CLU_189012_0_0_6"/>
<dbReference type="Proteomes" id="UP000001410">
    <property type="component" value="Chromosome"/>
</dbReference>
<dbReference type="GO" id="GO:0005886">
    <property type="term" value="C:plasma membrane"/>
    <property type="evidence" value="ECO:0007669"/>
    <property type="project" value="UniProtKB-SubCell"/>
</dbReference>
<dbReference type="GO" id="GO:0090729">
    <property type="term" value="F:toxin activity"/>
    <property type="evidence" value="ECO:0007669"/>
    <property type="project" value="UniProtKB-KW"/>
</dbReference>
<dbReference type="InterPro" id="IPR019689">
    <property type="entry name" value="Toxin_GhoT/OrtT"/>
</dbReference>
<dbReference type="Pfam" id="PF10753">
    <property type="entry name" value="Toxin_GhoT_OrtT"/>
    <property type="match status" value="1"/>
</dbReference>
<sequence>MSLYQHMLVFYAVMAAIAFLITWFLSHDKKRIRFLSAFLVGATWPMSFPVALLFSLF</sequence>
<proteinExistence type="inferred from homology"/>
<feature type="chain" id="PRO_0000168934" description="Orphan toxin OrtT">
    <location>
        <begin position="1"/>
        <end position="57"/>
    </location>
</feature>
<feature type="transmembrane region" description="Helical" evidence="2">
    <location>
        <begin position="6"/>
        <end position="26"/>
    </location>
</feature>
<feature type="transmembrane region" description="Helical" evidence="2">
    <location>
        <begin position="34"/>
        <end position="54"/>
    </location>
</feature>
<comment type="function">
    <text evidence="1">Acts as an orphan toxin which is important for maintaining cell fitness during stress related to the stringent response. Increases the formation of persister cells. Has no known antitoxin.</text>
</comment>
<comment type="subcellular location">
    <subcellularLocation>
        <location evidence="1">Cell inner membrane</location>
        <topology evidence="3">Multi-pass membrane protein</topology>
    </subcellularLocation>
</comment>
<comment type="similarity">
    <text evidence="3">Belongs to the GhoT/OrtT toxin family.</text>
</comment>
<comment type="sequence caution" evidence="3">
    <conflict type="erroneous initiation">
        <sequence resource="EMBL-CDS" id="AAN80332"/>
    </conflict>
    <text>Extended N-terminus.</text>
</comment>
<evidence type="ECO:0000250" key="1">
    <source>
        <dbReference type="UniProtKB" id="P64453"/>
    </source>
</evidence>
<evidence type="ECO:0000255" key="2"/>
<evidence type="ECO:0000305" key="3"/>
<keyword id="KW-0997">Cell inner membrane</keyword>
<keyword id="KW-1003">Cell membrane</keyword>
<keyword id="KW-0472">Membrane</keyword>
<keyword id="KW-1185">Reference proteome</keyword>
<keyword id="KW-0346">Stress response</keyword>
<keyword id="KW-0800">Toxin</keyword>
<keyword id="KW-0812">Transmembrane</keyword>
<keyword id="KW-1133">Transmembrane helix</keyword>
<name>ORTT_ECOL6</name>
<reference key="1">
    <citation type="journal article" date="2002" name="Proc. Natl. Acad. Sci. U.S.A.">
        <title>Extensive mosaic structure revealed by the complete genome sequence of uropathogenic Escherichia coli.</title>
        <authorList>
            <person name="Welch R.A."/>
            <person name="Burland V."/>
            <person name="Plunkett G. III"/>
            <person name="Redford P."/>
            <person name="Roesch P."/>
            <person name="Rasko D."/>
            <person name="Buckles E.L."/>
            <person name="Liou S.-R."/>
            <person name="Boutin A."/>
            <person name="Hackett J."/>
            <person name="Stroud D."/>
            <person name="Mayhew G.F."/>
            <person name="Rose D.J."/>
            <person name="Zhou S."/>
            <person name="Schwartz D.C."/>
            <person name="Perna N.T."/>
            <person name="Mobley H.L.T."/>
            <person name="Donnenberg M.S."/>
            <person name="Blattner F.R."/>
        </authorList>
    </citation>
    <scope>NUCLEOTIDE SEQUENCE [LARGE SCALE GENOMIC DNA]</scope>
    <source>
        <strain>CFT073 / ATCC 700928 / UPEC</strain>
    </source>
</reference>
<accession>P64454</accession>
<accession>P76109</accession>
<gene>
    <name evidence="3" type="primary">ortT</name>
    <name type="ordered locus">c1870</name>
</gene>
<organism>
    <name type="scientific">Escherichia coli O6:H1 (strain CFT073 / ATCC 700928 / UPEC)</name>
    <dbReference type="NCBI Taxonomy" id="199310"/>
    <lineage>
        <taxon>Bacteria</taxon>
        <taxon>Pseudomonadati</taxon>
        <taxon>Pseudomonadota</taxon>
        <taxon>Gammaproteobacteria</taxon>
        <taxon>Enterobacterales</taxon>
        <taxon>Enterobacteriaceae</taxon>
        <taxon>Escherichia</taxon>
    </lineage>
</organism>
<protein>
    <recommendedName>
        <fullName evidence="3">Orphan toxin OrtT</fullName>
    </recommendedName>
</protein>